<gene>
    <name evidence="1" type="primary">ispE</name>
    <name type="ordered locus">APH_0574</name>
</gene>
<evidence type="ECO:0000255" key="1">
    <source>
        <dbReference type="HAMAP-Rule" id="MF_00061"/>
    </source>
</evidence>
<sequence>MSKYFISAPAKINLFLHIVGKAPCGYHLIESVFAFVELYDVLEFDIGSRNRGIRFLKPSCINRRDNTIQRAIGHLVRRCSPGTTDNVYVKVLKNIPVSSGLAGGSADAAAAINLLSKLWGINEKETERVAFRVGSDVPVCLESKTAFVAGMGDVVELLEDSFLPRHVILVGPKVELSTKSVFDMYNPKAFSPSIGKLPGNSEDWLSLLKEARNDLTEVSVELVPEIRIILDVLGSLDGCCFSRMSGSGAMSFAIFEDENSAELATRYLRRNYPDWFIFKTRIIRSSDQEDNNMGNL</sequence>
<accession>Q2GKD6</accession>
<comment type="function">
    <text evidence="1">Catalyzes the phosphorylation of the position 2 hydroxy group of 4-diphosphocytidyl-2C-methyl-D-erythritol.</text>
</comment>
<comment type="catalytic activity">
    <reaction evidence="1">
        <text>4-CDP-2-C-methyl-D-erythritol + ATP = 4-CDP-2-C-methyl-D-erythritol 2-phosphate + ADP + H(+)</text>
        <dbReference type="Rhea" id="RHEA:18437"/>
        <dbReference type="ChEBI" id="CHEBI:15378"/>
        <dbReference type="ChEBI" id="CHEBI:30616"/>
        <dbReference type="ChEBI" id="CHEBI:57823"/>
        <dbReference type="ChEBI" id="CHEBI:57919"/>
        <dbReference type="ChEBI" id="CHEBI:456216"/>
        <dbReference type="EC" id="2.7.1.148"/>
    </reaction>
</comment>
<comment type="pathway">
    <text evidence="1">Isoprenoid biosynthesis; isopentenyl diphosphate biosynthesis via DXP pathway; isopentenyl diphosphate from 1-deoxy-D-xylulose 5-phosphate: step 3/6.</text>
</comment>
<comment type="similarity">
    <text evidence="1">Belongs to the GHMP kinase family. IspE subfamily.</text>
</comment>
<protein>
    <recommendedName>
        <fullName evidence="1">4-diphosphocytidyl-2-C-methyl-D-erythritol kinase</fullName>
        <shortName evidence="1">CMK</shortName>
        <ecNumber evidence="1">2.7.1.148</ecNumber>
    </recommendedName>
    <alternativeName>
        <fullName evidence="1">4-(cytidine-5'-diphospho)-2-C-methyl-D-erythritol kinase</fullName>
    </alternativeName>
</protein>
<feature type="chain" id="PRO_1000007809" description="4-diphosphocytidyl-2-C-methyl-D-erythritol kinase">
    <location>
        <begin position="1"/>
        <end position="296"/>
    </location>
</feature>
<feature type="active site" evidence="1">
    <location>
        <position position="11"/>
    </location>
</feature>
<feature type="active site" evidence="1">
    <location>
        <position position="136"/>
    </location>
</feature>
<feature type="binding site" evidence="1">
    <location>
        <begin position="96"/>
        <end position="106"/>
    </location>
    <ligand>
        <name>ATP</name>
        <dbReference type="ChEBI" id="CHEBI:30616"/>
    </ligand>
</feature>
<proteinExistence type="inferred from homology"/>
<keyword id="KW-0067">ATP-binding</keyword>
<keyword id="KW-0414">Isoprene biosynthesis</keyword>
<keyword id="KW-0418">Kinase</keyword>
<keyword id="KW-0547">Nucleotide-binding</keyword>
<keyword id="KW-0808">Transferase</keyword>
<name>ISPE_ANAPZ</name>
<dbReference type="EC" id="2.7.1.148" evidence="1"/>
<dbReference type="EMBL" id="CP000235">
    <property type="protein sequence ID" value="ABD43767.1"/>
    <property type="molecule type" value="Genomic_DNA"/>
</dbReference>
<dbReference type="RefSeq" id="WP_011450686.1">
    <property type="nucleotide sequence ID" value="NC_007797.1"/>
</dbReference>
<dbReference type="SMR" id="Q2GKD6"/>
<dbReference type="STRING" id="212042.APH_0574"/>
<dbReference type="PaxDb" id="212042-APH_0574"/>
<dbReference type="EnsemblBacteria" id="ABD43767">
    <property type="protein sequence ID" value="ABD43767"/>
    <property type="gene ID" value="APH_0574"/>
</dbReference>
<dbReference type="KEGG" id="aph:APH_0574"/>
<dbReference type="eggNOG" id="COG1947">
    <property type="taxonomic scope" value="Bacteria"/>
</dbReference>
<dbReference type="HOGENOM" id="CLU_053057_3_0_5"/>
<dbReference type="UniPathway" id="UPA00056">
    <property type="reaction ID" value="UER00094"/>
</dbReference>
<dbReference type="Proteomes" id="UP000001943">
    <property type="component" value="Chromosome"/>
</dbReference>
<dbReference type="GO" id="GO:0050515">
    <property type="term" value="F:4-(cytidine 5'-diphospho)-2-C-methyl-D-erythritol kinase activity"/>
    <property type="evidence" value="ECO:0007669"/>
    <property type="project" value="UniProtKB-UniRule"/>
</dbReference>
<dbReference type="GO" id="GO:0005524">
    <property type="term" value="F:ATP binding"/>
    <property type="evidence" value="ECO:0007669"/>
    <property type="project" value="UniProtKB-UniRule"/>
</dbReference>
<dbReference type="GO" id="GO:0019288">
    <property type="term" value="P:isopentenyl diphosphate biosynthetic process, methylerythritol 4-phosphate pathway"/>
    <property type="evidence" value="ECO:0007669"/>
    <property type="project" value="UniProtKB-UniRule"/>
</dbReference>
<dbReference type="GO" id="GO:0016114">
    <property type="term" value="P:terpenoid biosynthetic process"/>
    <property type="evidence" value="ECO:0007669"/>
    <property type="project" value="InterPro"/>
</dbReference>
<dbReference type="Gene3D" id="3.30.230.10">
    <property type="match status" value="1"/>
</dbReference>
<dbReference type="Gene3D" id="3.30.70.890">
    <property type="entry name" value="GHMP kinase, C-terminal domain"/>
    <property type="match status" value="1"/>
</dbReference>
<dbReference type="HAMAP" id="MF_00061">
    <property type="entry name" value="IspE"/>
    <property type="match status" value="1"/>
</dbReference>
<dbReference type="InterPro" id="IPR013750">
    <property type="entry name" value="GHMP_kinase_C_dom"/>
</dbReference>
<dbReference type="InterPro" id="IPR036554">
    <property type="entry name" value="GHMP_kinase_C_sf"/>
</dbReference>
<dbReference type="InterPro" id="IPR006204">
    <property type="entry name" value="GHMP_kinase_N_dom"/>
</dbReference>
<dbReference type="InterPro" id="IPR004424">
    <property type="entry name" value="IspE"/>
</dbReference>
<dbReference type="InterPro" id="IPR020568">
    <property type="entry name" value="Ribosomal_Su5_D2-typ_SF"/>
</dbReference>
<dbReference type="InterPro" id="IPR014721">
    <property type="entry name" value="Ribsml_uS5_D2-typ_fold_subgr"/>
</dbReference>
<dbReference type="NCBIfam" id="TIGR00154">
    <property type="entry name" value="ispE"/>
    <property type="match status" value="1"/>
</dbReference>
<dbReference type="NCBIfam" id="NF011202">
    <property type="entry name" value="PRK14608.1"/>
    <property type="match status" value="1"/>
</dbReference>
<dbReference type="PANTHER" id="PTHR43527">
    <property type="entry name" value="4-DIPHOSPHOCYTIDYL-2-C-METHYL-D-ERYTHRITOL KINASE, CHLOROPLASTIC"/>
    <property type="match status" value="1"/>
</dbReference>
<dbReference type="PANTHER" id="PTHR43527:SF2">
    <property type="entry name" value="4-DIPHOSPHOCYTIDYL-2-C-METHYL-D-ERYTHRITOL KINASE, CHLOROPLASTIC"/>
    <property type="match status" value="1"/>
</dbReference>
<dbReference type="Pfam" id="PF08544">
    <property type="entry name" value="GHMP_kinases_C"/>
    <property type="match status" value="1"/>
</dbReference>
<dbReference type="Pfam" id="PF00288">
    <property type="entry name" value="GHMP_kinases_N"/>
    <property type="match status" value="1"/>
</dbReference>
<dbReference type="PIRSF" id="PIRSF010376">
    <property type="entry name" value="IspE"/>
    <property type="match status" value="1"/>
</dbReference>
<dbReference type="SUPFAM" id="SSF55060">
    <property type="entry name" value="GHMP Kinase, C-terminal domain"/>
    <property type="match status" value="1"/>
</dbReference>
<dbReference type="SUPFAM" id="SSF54211">
    <property type="entry name" value="Ribosomal protein S5 domain 2-like"/>
    <property type="match status" value="1"/>
</dbReference>
<reference key="1">
    <citation type="journal article" date="2006" name="PLoS Genet.">
        <title>Comparative genomics of emerging human ehrlichiosis agents.</title>
        <authorList>
            <person name="Dunning Hotopp J.C."/>
            <person name="Lin M."/>
            <person name="Madupu R."/>
            <person name="Crabtree J."/>
            <person name="Angiuoli S.V."/>
            <person name="Eisen J.A."/>
            <person name="Seshadri R."/>
            <person name="Ren Q."/>
            <person name="Wu M."/>
            <person name="Utterback T.R."/>
            <person name="Smith S."/>
            <person name="Lewis M."/>
            <person name="Khouri H."/>
            <person name="Zhang C."/>
            <person name="Niu H."/>
            <person name="Lin Q."/>
            <person name="Ohashi N."/>
            <person name="Zhi N."/>
            <person name="Nelson W.C."/>
            <person name="Brinkac L.M."/>
            <person name="Dodson R.J."/>
            <person name="Rosovitz M.J."/>
            <person name="Sundaram J.P."/>
            <person name="Daugherty S.C."/>
            <person name="Davidsen T."/>
            <person name="Durkin A.S."/>
            <person name="Gwinn M.L."/>
            <person name="Haft D.H."/>
            <person name="Selengut J.D."/>
            <person name="Sullivan S.A."/>
            <person name="Zafar N."/>
            <person name="Zhou L."/>
            <person name="Benahmed F."/>
            <person name="Forberger H."/>
            <person name="Halpin R."/>
            <person name="Mulligan S."/>
            <person name="Robinson J."/>
            <person name="White O."/>
            <person name="Rikihisa Y."/>
            <person name="Tettelin H."/>
        </authorList>
    </citation>
    <scope>NUCLEOTIDE SEQUENCE [LARGE SCALE GENOMIC DNA]</scope>
    <source>
        <strain>HZ</strain>
    </source>
</reference>
<organism>
    <name type="scientific">Anaplasma phagocytophilum (strain HZ)</name>
    <dbReference type="NCBI Taxonomy" id="212042"/>
    <lineage>
        <taxon>Bacteria</taxon>
        <taxon>Pseudomonadati</taxon>
        <taxon>Pseudomonadota</taxon>
        <taxon>Alphaproteobacteria</taxon>
        <taxon>Rickettsiales</taxon>
        <taxon>Anaplasmataceae</taxon>
        <taxon>Anaplasma</taxon>
        <taxon>phagocytophilum group</taxon>
    </lineage>
</organism>